<protein>
    <recommendedName>
        <fullName>Universal stress protein Sll1654</fullName>
        <shortName>USP Sll1654</shortName>
    </recommendedName>
</protein>
<keyword id="KW-1185">Reference proteome</keyword>
<feature type="chain" id="PRO_0000147442" description="Universal stress protein Sll1654">
    <location>
        <begin position="1"/>
        <end position="157"/>
    </location>
</feature>
<sequence length="157" mass="16769">MSINCWRSPNRAIGKSSGGVIMFKTILFPLDRSREARDAAQMVADLVKIHQSQLILLSVVEKNPPGQDHEAHGMDSPEAVAKLLEAAQAVFSQQGIATKTIEREGMASFTICDVADEVNADLIVMGCRGLGLTTEGVAESVTARVINLSPCPVLVVP</sequence>
<accession>P72817</accession>
<name>Y1654_SYNY3</name>
<dbReference type="EMBL" id="BA000022">
    <property type="protein sequence ID" value="BAA16832.1"/>
    <property type="molecule type" value="Genomic_DNA"/>
</dbReference>
<dbReference type="PIR" id="S74681">
    <property type="entry name" value="S74681"/>
</dbReference>
<dbReference type="SMR" id="P72817"/>
<dbReference type="IntAct" id="P72817">
    <property type="interactions" value="1"/>
</dbReference>
<dbReference type="STRING" id="1148.gene:10497690"/>
<dbReference type="PaxDb" id="1148-1651906"/>
<dbReference type="EnsemblBacteria" id="BAA16832">
    <property type="protein sequence ID" value="BAA16832"/>
    <property type="gene ID" value="BAA16832"/>
</dbReference>
<dbReference type="KEGG" id="syn:sll1654"/>
<dbReference type="eggNOG" id="COG0589">
    <property type="taxonomic scope" value="Bacteria"/>
</dbReference>
<dbReference type="InParanoid" id="P72817"/>
<dbReference type="PhylomeDB" id="P72817"/>
<dbReference type="Proteomes" id="UP000001425">
    <property type="component" value="Chromosome"/>
</dbReference>
<dbReference type="CDD" id="cd00293">
    <property type="entry name" value="USP-like"/>
    <property type="match status" value="1"/>
</dbReference>
<dbReference type="Gene3D" id="3.40.50.620">
    <property type="entry name" value="HUPs"/>
    <property type="match status" value="1"/>
</dbReference>
<dbReference type="InterPro" id="IPR014729">
    <property type="entry name" value="Rossmann-like_a/b/a_fold"/>
</dbReference>
<dbReference type="InterPro" id="IPR006015">
    <property type="entry name" value="Universal_stress_UspA"/>
</dbReference>
<dbReference type="InterPro" id="IPR006016">
    <property type="entry name" value="UspA"/>
</dbReference>
<dbReference type="PANTHER" id="PTHR46268">
    <property type="entry name" value="STRESS RESPONSE PROTEIN NHAX"/>
    <property type="match status" value="1"/>
</dbReference>
<dbReference type="PANTHER" id="PTHR46268:SF6">
    <property type="entry name" value="UNIVERSAL STRESS PROTEIN UP12"/>
    <property type="match status" value="1"/>
</dbReference>
<dbReference type="Pfam" id="PF00582">
    <property type="entry name" value="Usp"/>
    <property type="match status" value="1"/>
</dbReference>
<dbReference type="PRINTS" id="PR01438">
    <property type="entry name" value="UNVRSLSTRESS"/>
</dbReference>
<dbReference type="SUPFAM" id="SSF52402">
    <property type="entry name" value="Adenine nucleotide alpha hydrolases-like"/>
    <property type="match status" value="1"/>
</dbReference>
<reference key="1">
    <citation type="journal article" date="1996" name="DNA Res.">
        <title>Sequence analysis of the genome of the unicellular cyanobacterium Synechocystis sp. strain PCC6803. II. Sequence determination of the entire genome and assignment of potential protein-coding regions.</title>
        <authorList>
            <person name="Kaneko T."/>
            <person name="Sato S."/>
            <person name="Kotani H."/>
            <person name="Tanaka A."/>
            <person name="Asamizu E."/>
            <person name="Nakamura Y."/>
            <person name="Miyajima N."/>
            <person name="Hirosawa M."/>
            <person name="Sugiura M."/>
            <person name="Sasamoto S."/>
            <person name="Kimura T."/>
            <person name="Hosouchi T."/>
            <person name="Matsuno A."/>
            <person name="Muraki A."/>
            <person name="Nakazaki N."/>
            <person name="Naruo K."/>
            <person name="Okumura S."/>
            <person name="Shimpo S."/>
            <person name="Takeuchi C."/>
            <person name="Wada T."/>
            <person name="Watanabe A."/>
            <person name="Yamada M."/>
            <person name="Yasuda M."/>
            <person name="Tabata S."/>
        </authorList>
    </citation>
    <scope>NUCLEOTIDE SEQUENCE [LARGE SCALE GENOMIC DNA]</scope>
    <source>
        <strain>ATCC 27184 / PCC 6803 / Kazusa</strain>
    </source>
</reference>
<organism>
    <name type="scientific">Synechocystis sp. (strain ATCC 27184 / PCC 6803 / Kazusa)</name>
    <dbReference type="NCBI Taxonomy" id="1111708"/>
    <lineage>
        <taxon>Bacteria</taxon>
        <taxon>Bacillati</taxon>
        <taxon>Cyanobacteriota</taxon>
        <taxon>Cyanophyceae</taxon>
        <taxon>Synechococcales</taxon>
        <taxon>Merismopediaceae</taxon>
        <taxon>Synechocystis</taxon>
    </lineage>
</organism>
<proteinExistence type="inferred from homology"/>
<gene>
    <name type="ordered locus">sll1654</name>
</gene>
<evidence type="ECO:0000305" key="1"/>
<comment type="similarity">
    <text evidence="1">Belongs to the universal stress protein A family.</text>
</comment>